<reference key="1">
    <citation type="journal article" date="2003" name="Proc. Natl. Acad. Sci. U.S.A.">
        <title>The complete genome sequence of the Arabidopsis and tomato pathogen Pseudomonas syringae pv. tomato DC3000.</title>
        <authorList>
            <person name="Buell C.R."/>
            <person name="Joardar V."/>
            <person name="Lindeberg M."/>
            <person name="Selengut J."/>
            <person name="Paulsen I.T."/>
            <person name="Gwinn M.L."/>
            <person name="Dodson R.J."/>
            <person name="DeBoy R.T."/>
            <person name="Durkin A.S."/>
            <person name="Kolonay J.F."/>
            <person name="Madupu R."/>
            <person name="Daugherty S.C."/>
            <person name="Brinkac L.M."/>
            <person name="Beanan M.J."/>
            <person name="Haft D.H."/>
            <person name="Nelson W.C."/>
            <person name="Davidsen T.M."/>
            <person name="Zafar N."/>
            <person name="Zhou L."/>
            <person name="Liu J."/>
            <person name="Yuan Q."/>
            <person name="Khouri H.M."/>
            <person name="Fedorova N.B."/>
            <person name="Tran B."/>
            <person name="Russell D."/>
            <person name="Berry K.J."/>
            <person name="Utterback T.R."/>
            <person name="Van Aken S.E."/>
            <person name="Feldblyum T.V."/>
            <person name="D'Ascenzo M."/>
            <person name="Deng W.-L."/>
            <person name="Ramos A.R."/>
            <person name="Alfano J.R."/>
            <person name="Cartinhour S."/>
            <person name="Chatterjee A.K."/>
            <person name="Delaney T.P."/>
            <person name="Lazarowitz S.G."/>
            <person name="Martin G.B."/>
            <person name="Schneider D.J."/>
            <person name="Tang X."/>
            <person name="Bender C.L."/>
            <person name="White O."/>
            <person name="Fraser C.M."/>
            <person name="Collmer A."/>
        </authorList>
    </citation>
    <scope>NUCLEOTIDE SEQUENCE [LARGE SCALE GENOMIC DNA]</scope>
    <source>
        <strain>ATCC BAA-871 / DC3000</strain>
    </source>
</reference>
<proteinExistence type="inferred from homology"/>
<organism>
    <name type="scientific">Pseudomonas syringae pv. tomato (strain ATCC BAA-871 / DC3000)</name>
    <dbReference type="NCBI Taxonomy" id="223283"/>
    <lineage>
        <taxon>Bacteria</taxon>
        <taxon>Pseudomonadati</taxon>
        <taxon>Pseudomonadota</taxon>
        <taxon>Gammaproteobacteria</taxon>
        <taxon>Pseudomonadales</taxon>
        <taxon>Pseudomonadaceae</taxon>
        <taxon>Pseudomonas</taxon>
    </lineage>
</organism>
<name>RBFA_PSESM</name>
<evidence type="ECO:0000255" key="1">
    <source>
        <dbReference type="HAMAP-Rule" id="MF_00003"/>
    </source>
</evidence>
<evidence type="ECO:0000256" key="2">
    <source>
        <dbReference type="SAM" id="MobiDB-lite"/>
    </source>
</evidence>
<dbReference type="EMBL" id="AE016853">
    <property type="protein sequence ID" value="AAO57937.1"/>
    <property type="molecule type" value="Genomic_DNA"/>
</dbReference>
<dbReference type="RefSeq" id="NP_794242.1">
    <property type="nucleotide sequence ID" value="NC_004578.1"/>
</dbReference>
<dbReference type="RefSeq" id="WP_003377505.1">
    <property type="nucleotide sequence ID" value="NC_004578.1"/>
</dbReference>
<dbReference type="SMR" id="Q87WQ6"/>
<dbReference type="STRING" id="223283.PSPTO_4489"/>
<dbReference type="GeneID" id="61789779"/>
<dbReference type="KEGG" id="pst:PSPTO_4489"/>
<dbReference type="PATRIC" id="fig|223283.9.peg.4605"/>
<dbReference type="eggNOG" id="COG0858">
    <property type="taxonomic scope" value="Bacteria"/>
</dbReference>
<dbReference type="HOGENOM" id="CLU_089475_5_0_6"/>
<dbReference type="OrthoDB" id="307788at2"/>
<dbReference type="PhylomeDB" id="Q87WQ6"/>
<dbReference type="Proteomes" id="UP000002515">
    <property type="component" value="Chromosome"/>
</dbReference>
<dbReference type="GO" id="GO:0005829">
    <property type="term" value="C:cytosol"/>
    <property type="evidence" value="ECO:0007669"/>
    <property type="project" value="TreeGrafter"/>
</dbReference>
<dbReference type="GO" id="GO:0043024">
    <property type="term" value="F:ribosomal small subunit binding"/>
    <property type="evidence" value="ECO:0007669"/>
    <property type="project" value="TreeGrafter"/>
</dbReference>
<dbReference type="GO" id="GO:0030490">
    <property type="term" value="P:maturation of SSU-rRNA"/>
    <property type="evidence" value="ECO:0007669"/>
    <property type="project" value="UniProtKB-UniRule"/>
</dbReference>
<dbReference type="Gene3D" id="3.30.300.20">
    <property type="match status" value="1"/>
</dbReference>
<dbReference type="HAMAP" id="MF_00003">
    <property type="entry name" value="RbfA"/>
    <property type="match status" value="1"/>
</dbReference>
<dbReference type="InterPro" id="IPR015946">
    <property type="entry name" value="KH_dom-like_a/b"/>
</dbReference>
<dbReference type="InterPro" id="IPR000238">
    <property type="entry name" value="RbfA"/>
</dbReference>
<dbReference type="InterPro" id="IPR023799">
    <property type="entry name" value="RbfA_dom_sf"/>
</dbReference>
<dbReference type="InterPro" id="IPR020053">
    <property type="entry name" value="Ribosome-bd_factorA_CS"/>
</dbReference>
<dbReference type="NCBIfam" id="TIGR00082">
    <property type="entry name" value="rbfA"/>
    <property type="match status" value="1"/>
</dbReference>
<dbReference type="PANTHER" id="PTHR33515">
    <property type="entry name" value="RIBOSOME-BINDING FACTOR A, CHLOROPLASTIC-RELATED"/>
    <property type="match status" value="1"/>
</dbReference>
<dbReference type="PANTHER" id="PTHR33515:SF1">
    <property type="entry name" value="RIBOSOME-BINDING FACTOR A, CHLOROPLASTIC-RELATED"/>
    <property type="match status" value="1"/>
</dbReference>
<dbReference type="Pfam" id="PF02033">
    <property type="entry name" value="RBFA"/>
    <property type="match status" value="1"/>
</dbReference>
<dbReference type="SUPFAM" id="SSF89919">
    <property type="entry name" value="Ribosome-binding factor A, RbfA"/>
    <property type="match status" value="1"/>
</dbReference>
<dbReference type="PROSITE" id="PS01319">
    <property type="entry name" value="RBFA"/>
    <property type="match status" value="1"/>
</dbReference>
<gene>
    <name evidence="1" type="primary">rbfA</name>
    <name type="ordered locus">PSPTO_4489</name>
</gene>
<sequence length="138" mass="15449">MAKEYSRTQRIGDQMQRELAQLIRREIKDPRVGLVTITAVDVSRDVGHAKIFMTVMGQDNAEDIAQTIKVLNAAAGFLRMQLAREMKLRSVPQLHFHYDESVVRGAHLSALIERAVAQDSQHQEGPASPDAKPESTEE</sequence>
<protein>
    <recommendedName>
        <fullName evidence="1">Ribosome-binding factor A</fullName>
    </recommendedName>
</protein>
<comment type="function">
    <text evidence="1">One of several proteins that assist in the late maturation steps of the functional core of the 30S ribosomal subunit. Associates with free 30S ribosomal subunits (but not with 30S subunits that are part of 70S ribosomes or polysomes). Required for efficient processing of 16S rRNA. May interact with the 5'-terminal helix region of 16S rRNA.</text>
</comment>
<comment type="subunit">
    <text evidence="1">Monomer. Binds 30S ribosomal subunits, but not 50S ribosomal subunits or 70S ribosomes.</text>
</comment>
<comment type="subcellular location">
    <subcellularLocation>
        <location evidence="1">Cytoplasm</location>
    </subcellularLocation>
</comment>
<comment type="similarity">
    <text evidence="1">Belongs to the RbfA family.</text>
</comment>
<accession>Q87WQ6</accession>
<keyword id="KW-0963">Cytoplasm</keyword>
<keyword id="KW-1185">Reference proteome</keyword>
<keyword id="KW-0690">Ribosome biogenesis</keyword>
<feature type="chain" id="PRO_0000102715" description="Ribosome-binding factor A">
    <location>
        <begin position="1"/>
        <end position="138"/>
    </location>
</feature>
<feature type="region of interest" description="Disordered" evidence="2">
    <location>
        <begin position="116"/>
        <end position="138"/>
    </location>
</feature>